<keyword id="KW-0067">ATP-binding</keyword>
<keyword id="KW-0547">Nucleotide-binding</keyword>
<keyword id="KW-0346">Stress response</keyword>
<proteinExistence type="evidence at transcript level"/>
<protein>
    <recommendedName>
        <fullName>Heat shock cognate 70 kDa protein</fullName>
    </recommendedName>
</protein>
<dbReference type="EMBL" id="X06932">
    <property type="protein sequence ID" value="CAA30018.1"/>
    <property type="molecule type" value="Genomic_DNA"/>
</dbReference>
<dbReference type="EMBL" id="X13301">
    <property type="protein sequence ID" value="CAA31663.1"/>
    <property type="molecule type" value="mRNA"/>
</dbReference>
<dbReference type="PIR" id="S03250">
    <property type="entry name" value="S03250"/>
</dbReference>
<dbReference type="SMR" id="P09189"/>
<dbReference type="GO" id="GO:0005524">
    <property type="term" value="F:ATP binding"/>
    <property type="evidence" value="ECO:0007669"/>
    <property type="project" value="UniProtKB-KW"/>
</dbReference>
<dbReference type="GO" id="GO:0140662">
    <property type="term" value="F:ATP-dependent protein folding chaperone"/>
    <property type="evidence" value="ECO:0007669"/>
    <property type="project" value="InterPro"/>
</dbReference>
<dbReference type="CDD" id="cd10233">
    <property type="entry name" value="ASKHA_NBD_HSP70_HSPA1"/>
    <property type="match status" value="1"/>
</dbReference>
<dbReference type="FunFam" id="2.60.34.10:FF:000002">
    <property type="entry name" value="Heat shock 70 kDa"/>
    <property type="match status" value="1"/>
</dbReference>
<dbReference type="FunFam" id="3.90.640.10:FF:000002">
    <property type="entry name" value="Heat shock 70 kDa"/>
    <property type="match status" value="1"/>
</dbReference>
<dbReference type="FunFam" id="1.20.1270.10:FF:000028">
    <property type="entry name" value="Heat shock 70 kDa protein"/>
    <property type="match status" value="1"/>
</dbReference>
<dbReference type="FunFam" id="3.30.30.30:FF:000019">
    <property type="entry name" value="Heat shock 70 kDa protein"/>
    <property type="match status" value="1"/>
</dbReference>
<dbReference type="FunFam" id="3.30.420.40:FF:000172">
    <property type="entry name" value="Heat shock 70 kDa protein"/>
    <property type="match status" value="1"/>
</dbReference>
<dbReference type="FunFam" id="3.30.420.40:FF:000465">
    <property type="entry name" value="Heat shock cognate 70 kDa protein 2"/>
    <property type="match status" value="1"/>
</dbReference>
<dbReference type="FunFam" id="3.30.420.40:FF:000026">
    <property type="entry name" value="Heat shock protein 70"/>
    <property type="match status" value="1"/>
</dbReference>
<dbReference type="Gene3D" id="1.20.1270.10">
    <property type="match status" value="1"/>
</dbReference>
<dbReference type="Gene3D" id="3.30.30.30">
    <property type="match status" value="1"/>
</dbReference>
<dbReference type="Gene3D" id="3.30.420.40">
    <property type="match status" value="2"/>
</dbReference>
<dbReference type="Gene3D" id="3.90.640.10">
    <property type="entry name" value="Actin, Chain A, domain 4"/>
    <property type="match status" value="1"/>
</dbReference>
<dbReference type="Gene3D" id="2.60.34.10">
    <property type="entry name" value="Substrate Binding Domain Of DNAk, Chain A, domain 1"/>
    <property type="match status" value="1"/>
</dbReference>
<dbReference type="InterPro" id="IPR043129">
    <property type="entry name" value="ATPase_NBD"/>
</dbReference>
<dbReference type="InterPro" id="IPR018181">
    <property type="entry name" value="Heat_shock_70_CS"/>
</dbReference>
<dbReference type="InterPro" id="IPR029048">
    <property type="entry name" value="HSP70_C_sf"/>
</dbReference>
<dbReference type="InterPro" id="IPR029047">
    <property type="entry name" value="HSP70_peptide-bd_sf"/>
</dbReference>
<dbReference type="InterPro" id="IPR013126">
    <property type="entry name" value="Hsp_70_fam"/>
</dbReference>
<dbReference type="NCBIfam" id="NF001413">
    <property type="entry name" value="PRK00290.1"/>
    <property type="match status" value="1"/>
</dbReference>
<dbReference type="PANTHER" id="PTHR19375">
    <property type="entry name" value="HEAT SHOCK PROTEIN 70KDA"/>
    <property type="match status" value="1"/>
</dbReference>
<dbReference type="Pfam" id="PF00012">
    <property type="entry name" value="HSP70"/>
    <property type="match status" value="1"/>
</dbReference>
<dbReference type="PRINTS" id="PR00301">
    <property type="entry name" value="HEATSHOCK70"/>
</dbReference>
<dbReference type="SUPFAM" id="SSF53067">
    <property type="entry name" value="Actin-like ATPase domain"/>
    <property type="match status" value="2"/>
</dbReference>
<dbReference type="SUPFAM" id="SSF100934">
    <property type="entry name" value="Heat shock protein 70kD (HSP70), C-terminal subdomain"/>
    <property type="match status" value="1"/>
</dbReference>
<dbReference type="SUPFAM" id="SSF100920">
    <property type="entry name" value="Heat shock protein 70kD (HSP70), peptide-binding domain"/>
    <property type="match status" value="1"/>
</dbReference>
<dbReference type="PROSITE" id="PS00297">
    <property type="entry name" value="HSP70_1"/>
    <property type="match status" value="1"/>
</dbReference>
<dbReference type="PROSITE" id="PS00329">
    <property type="entry name" value="HSP70_2"/>
    <property type="match status" value="1"/>
</dbReference>
<dbReference type="PROSITE" id="PS01036">
    <property type="entry name" value="HSP70_3"/>
    <property type="match status" value="1"/>
</dbReference>
<sequence>MAGKGEGPAIGIDLGTTYSCVGVWQHDRVEIIANDQGNRTTPSYVGFTDTERLIGDAAKNQVAMNPINTVFDAKRLIGRRFSDPSVQSDIKLWPFKVIPGPGDKPMIVVTYKGEEKQFAAEEISSMVLTKMKEIAEAYLGTTIKNAVVTVPAYFNDSQRQATKDAGVIAGLNVMRIINEPTAAAIAYGLDKKASSAGEKNVLIFDLGGGTFDVSLLTIEEGIFEVKATAGDTHLGGEDFDNRMVNHFVQEFKRKNKKDISGNPRALRRLRTACERAKRTLSSTAQTTIEIDSLYEGIDFYSTITRARFEELNMDLFRKCMEPVEKCLRDAKMDKSSVHDVVLVGGSTRIPKVQQLLQDFFNGKELCKSINPDEAVAYGAAVQAAILSGEGNEKVQDLLLLDVTPLSLGLETAGGGMTVLIPRNTTIPTKKEQVFSTYSDNQPGVLIQVYEGERARTKDNNLLGKFELSGIPPAPRGVPQITVCFDIDANGILNVSAEDKTTGQKNKITITNDKGRLSKEEIERMVQEAEKYKSEDEELKKKVEAKNALENYAYNMRNTIKDDKINSQLSAADKKRIEDAIDEAIKWLDNNQLAEADEFEDKMKELESICNPIIAKMYQGGAGGATMDEDGPSVGGSAGSQTGAGPKIEEVD</sequence>
<evidence type="ECO:0000256" key="1">
    <source>
        <dbReference type="SAM" id="MobiDB-lite"/>
    </source>
</evidence>
<evidence type="ECO:0000305" key="2"/>
<comment type="induction">
    <text>By cadmium.</text>
</comment>
<comment type="similarity">
    <text evidence="2">Belongs to the heat shock protein 70 family.</text>
</comment>
<organism>
    <name type="scientific">Petunia hybrida</name>
    <name type="common">Petunia</name>
    <dbReference type="NCBI Taxonomy" id="4102"/>
    <lineage>
        <taxon>Eukaryota</taxon>
        <taxon>Viridiplantae</taxon>
        <taxon>Streptophyta</taxon>
        <taxon>Embryophyta</taxon>
        <taxon>Tracheophyta</taxon>
        <taxon>Spermatophyta</taxon>
        <taxon>Magnoliopsida</taxon>
        <taxon>eudicotyledons</taxon>
        <taxon>Gunneridae</taxon>
        <taxon>Pentapetalae</taxon>
        <taxon>asterids</taxon>
        <taxon>lamiids</taxon>
        <taxon>Solanales</taxon>
        <taxon>Solanaceae</taxon>
        <taxon>Petunioideae</taxon>
        <taxon>Petunia</taxon>
    </lineage>
</organism>
<gene>
    <name type="primary">HSP70</name>
</gene>
<feature type="chain" id="PRO_0000078353" description="Heat shock cognate 70 kDa protein">
    <location>
        <begin position="1"/>
        <end position="651"/>
    </location>
</feature>
<feature type="region of interest" description="Disordered" evidence="1">
    <location>
        <begin position="619"/>
        <end position="651"/>
    </location>
</feature>
<reference key="1">
    <citation type="journal article" date="1988" name="Mol. Gen. Genet.">
        <title>The inhibition of petunia hsp70 mRNA processing during CdCl(2) stress.</title>
        <authorList>
            <person name="Winter J.A."/>
            <person name="Wright R."/>
            <person name="Duck N."/>
            <person name="Gasser C.S."/>
            <person name="Fraley R."/>
            <person name="Shah D.M."/>
        </authorList>
    </citation>
    <scope>NUCLEOTIDE SEQUENCE [GENOMIC DNA / MRNA]</scope>
    <source>
        <strain>cv. Mitchell</strain>
        <tissue>Leaf</tissue>
    </source>
</reference>
<name>HSP7C_PETHY</name>
<accession>P09189</accession>